<dbReference type="EC" id="6.1.1.19" evidence="1"/>
<dbReference type="EMBL" id="CP001657">
    <property type="protein sequence ID" value="ACT12848.1"/>
    <property type="molecule type" value="Genomic_DNA"/>
</dbReference>
<dbReference type="RefSeq" id="WP_015840054.1">
    <property type="nucleotide sequence ID" value="NC_012917.1"/>
</dbReference>
<dbReference type="SMR" id="C6DFD9"/>
<dbReference type="STRING" id="561230.PC1_1807"/>
<dbReference type="GeneID" id="67793809"/>
<dbReference type="KEGG" id="pct:PC1_1807"/>
<dbReference type="eggNOG" id="COG0018">
    <property type="taxonomic scope" value="Bacteria"/>
</dbReference>
<dbReference type="HOGENOM" id="CLU_006406_5_1_6"/>
<dbReference type="OrthoDB" id="9803211at2"/>
<dbReference type="Proteomes" id="UP000002736">
    <property type="component" value="Chromosome"/>
</dbReference>
<dbReference type="GO" id="GO:0005737">
    <property type="term" value="C:cytoplasm"/>
    <property type="evidence" value="ECO:0007669"/>
    <property type="project" value="UniProtKB-SubCell"/>
</dbReference>
<dbReference type="GO" id="GO:0004814">
    <property type="term" value="F:arginine-tRNA ligase activity"/>
    <property type="evidence" value="ECO:0007669"/>
    <property type="project" value="UniProtKB-UniRule"/>
</dbReference>
<dbReference type="GO" id="GO:0005524">
    <property type="term" value="F:ATP binding"/>
    <property type="evidence" value="ECO:0007669"/>
    <property type="project" value="UniProtKB-UniRule"/>
</dbReference>
<dbReference type="GO" id="GO:0006420">
    <property type="term" value="P:arginyl-tRNA aminoacylation"/>
    <property type="evidence" value="ECO:0007669"/>
    <property type="project" value="UniProtKB-UniRule"/>
</dbReference>
<dbReference type="CDD" id="cd07956">
    <property type="entry name" value="Anticodon_Ia_Arg"/>
    <property type="match status" value="1"/>
</dbReference>
<dbReference type="CDD" id="cd00671">
    <property type="entry name" value="ArgRS_core"/>
    <property type="match status" value="1"/>
</dbReference>
<dbReference type="FunFam" id="1.10.730.10:FF:000001">
    <property type="entry name" value="Arginine--tRNA ligase"/>
    <property type="match status" value="1"/>
</dbReference>
<dbReference type="FunFam" id="3.30.1360.70:FF:000001">
    <property type="entry name" value="Arginine--tRNA ligase"/>
    <property type="match status" value="1"/>
</dbReference>
<dbReference type="FunFam" id="3.40.50.620:FF:000030">
    <property type="entry name" value="Arginine--tRNA ligase"/>
    <property type="match status" value="1"/>
</dbReference>
<dbReference type="Gene3D" id="3.30.1360.70">
    <property type="entry name" value="Arginyl tRNA synthetase N-terminal domain"/>
    <property type="match status" value="1"/>
</dbReference>
<dbReference type="Gene3D" id="3.40.50.620">
    <property type="entry name" value="HUPs"/>
    <property type="match status" value="1"/>
</dbReference>
<dbReference type="Gene3D" id="1.10.730.10">
    <property type="entry name" value="Isoleucyl-tRNA Synthetase, Domain 1"/>
    <property type="match status" value="1"/>
</dbReference>
<dbReference type="HAMAP" id="MF_00123">
    <property type="entry name" value="Arg_tRNA_synth"/>
    <property type="match status" value="1"/>
</dbReference>
<dbReference type="InterPro" id="IPR001412">
    <property type="entry name" value="aa-tRNA-synth_I_CS"/>
</dbReference>
<dbReference type="InterPro" id="IPR001278">
    <property type="entry name" value="Arg-tRNA-ligase"/>
</dbReference>
<dbReference type="InterPro" id="IPR005148">
    <property type="entry name" value="Arg-tRNA-synth_N"/>
</dbReference>
<dbReference type="InterPro" id="IPR036695">
    <property type="entry name" value="Arg-tRNA-synth_N_sf"/>
</dbReference>
<dbReference type="InterPro" id="IPR035684">
    <property type="entry name" value="ArgRS_core"/>
</dbReference>
<dbReference type="InterPro" id="IPR008909">
    <property type="entry name" value="DALR_anticod-bd"/>
</dbReference>
<dbReference type="InterPro" id="IPR014729">
    <property type="entry name" value="Rossmann-like_a/b/a_fold"/>
</dbReference>
<dbReference type="InterPro" id="IPR009080">
    <property type="entry name" value="tRNAsynth_Ia_anticodon-bd"/>
</dbReference>
<dbReference type="NCBIfam" id="TIGR00456">
    <property type="entry name" value="argS"/>
    <property type="match status" value="1"/>
</dbReference>
<dbReference type="PANTHER" id="PTHR11956:SF5">
    <property type="entry name" value="ARGININE--TRNA LIGASE, CYTOPLASMIC"/>
    <property type="match status" value="1"/>
</dbReference>
<dbReference type="PANTHER" id="PTHR11956">
    <property type="entry name" value="ARGINYL-TRNA SYNTHETASE"/>
    <property type="match status" value="1"/>
</dbReference>
<dbReference type="Pfam" id="PF03485">
    <property type="entry name" value="Arg_tRNA_synt_N"/>
    <property type="match status" value="1"/>
</dbReference>
<dbReference type="Pfam" id="PF05746">
    <property type="entry name" value="DALR_1"/>
    <property type="match status" value="1"/>
</dbReference>
<dbReference type="Pfam" id="PF00750">
    <property type="entry name" value="tRNA-synt_1d"/>
    <property type="match status" value="1"/>
</dbReference>
<dbReference type="PRINTS" id="PR01038">
    <property type="entry name" value="TRNASYNTHARG"/>
</dbReference>
<dbReference type="SMART" id="SM01016">
    <property type="entry name" value="Arg_tRNA_synt_N"/>
    <property type="match status" value="1"/>
</dbReference>
<dbReference type="SMART" id="SM00836">
    <property type="entry name" value="DALR_1"/>
    <property type="match status" value="1"/>
</dbReference>
<dbReference type="SUPFAM" id="SSF47323">
    <property type="entry name" value="Anticodon-binding domain of a subclass of class I aminoacyl-tRNA synthetases"/>
    <property type="match status" value="1"/>
</dbReference>
<dbReference type="SUPFAM" id="SSF55190">
    <property type="entry name" value="Arginyl-tRNA synthetase (ArgRS), N-terminal 'additional' domain"/>
    <property type="match status" value="1"/>
</dbReference>
<dbReference type="SUPFAM" id="SSF52374">
    <property type="entry name" value="Nucleotidylyl transferase"/>
    <property type="match status" value="1"/>
</dbReference>
<dbReference type="PROSITE" id="PS00178">
    <property type="entry name" value="AA_TRNA_LIGASE_I"/>
    <property type="match status" value="1"/>
</dbReference>
<accession>C6DFD9</accession>
<name>SYR_PECCP</name>
<gene>
    <name evidence="1" type="primary">argS</name>
    <name type="ordered locus">PC1_1807</name>
</gene>
<comment type="catalytic activity">
    <reaction evidence="1">
        <text>tRNA(Arg) + L-arginine + ATP = L-arginyl-tRNA(Arg) + AMP + diphosphate</text>
        <dbReference type="Rhea" id="RHEA:20301"/>
        <dbReference type="Rhea" id="RHEA-COMP:9658"/>
        <dbReference type="Rhea" id="RHEA-COMP:9673"/>
        <dbReference type="ChEBI" id="CHEBI:30616"/>
        <dbReference type="ChEBI" id="CHEBI:32682"/>
        <dbReference type="ChEBI" id="CHEBI:33019"/>
        <dbReference type="ChEBI" id="CHEBI:78442"/>
        <dbReference type="ChEBI" id="CHEBI:78513"/>
        <dbReference type="ChEBI" id="CHEBI:456215"/>
        <dbReference type="EC" id="6.1.1.19"/>
    </reaction>
</comment>
<comment type="subunit">
    <text evidence="1">Monomer.</text>
</comment>
<comment type="subcellular location">
    <subcellularLocation>
        <location evidence="1">Cytoplasm</location>
    </subcellularLocation>
</comment>
<comment type="similarity">
    <text evidence="1">Belongs to the class-I aminoacyl-tRNA synthetase family.</text>
</comment>
<evidence type="ECO:0000255" key="1">
    <source>
        <dbReference type="HAMAP-Rule" id="MF_00123"/>
    </source>
</evidence>
<proteinExistence type="inferred from homology"/>
<feature type="chain" id="PRO_1000203101" description="Arginine--tRNA ligase">
    <location>
        <begin position="1"/>
        <end position="576"/>
    </location>
</feature>
<feature type="short sequence motif" description="'HIGH' region">
    <location>
        <begin position="122"/>
        <end position="132"/>
    </location>
</feature>
<protein>
    <recommendedName>
        <fullName evidence="1">Arginine--tRNA ligase</fullName>
        <ecNumber evidence="1">6.1.1.19</ecNumber>
    </recommendedName>
    <alternativeName>
        <fullName evidence="1">Arginyl-tRNA synthetase</fullName>
        <shortName evidence="1">ArgRS</shortName>
    </alternativeName>
</protein>
<sequence length="576" mass="64223">MNIQALLSEKVSQALTAAGAPADSEAQIRQSAKAQFGDYQANGVMAVAKKLGMPPRQLAEKVVQLLALEGIAEKTEIAGPGFINIFLDKQWVASQVENALNAPKLGLTPVEPQTIVIDYSAPNVAKEMHVGHLRSTIIGDAAARTLEFLGHNVIRANHVGDWGTQFGMLIAYLEKMQNENASEMDLSDLEAFYREAKKHYDDDADFAERARGYVVKLQGGDEYCRQMWRKLVDITMTQNQINYERLNVTLTKQDVMGESLYNSMLPGIVADLKAKGLAVESEGATVVFLDEYKNKEGEPMGVIIQKKDGGYLYTTTDIACAKYRYETLNADRVLYYIDSRQHQHLMQAWTIVRKAGYVPDSVSLEHHMFGMMLGKDGKPFKTRAGGTIKLSELLDEAYDRALKLIAEKNPQMESDELSALAKVVSIGAIKYADLSKSRTTDYVFDWDNMLAFEGNTAPYMQYAYTRVASIFKRAGIQEDSLTQPITLSDEREFALATRLLQFEETITSVAREGTPHVMCSYLYDLAGLFSGFYEHCPILNAESDDVRQSRLRLALLTAKTLKQGLDTLGIETVEKM</sequence>
<organism>
    <name type="scientific">Pectobacterium carotovorum subsp. carotovorum (strain PC1)</name>
    <dbReference type="NCBI Taxonomy" id="561230"/>
    <lineage>
        <taxon>Bacteria</taxon>
        <taxon>Pseudomonadati</taxon>
        <taxon>Pseudomonadota</taxon>
        <taxon>Gammaproteobacteria</taxon>
        <taxon>Enterobacterales</taxon>
        <taxon>Pectobacteriaceae</taxon>
        <taxon>Pectobacterium</taxon>
    </lineage>
</organism>
<reference key="1">
    <citation type="submission" date="2009-07" db="EMBL/GenBank/DDBJ databases">
        <title>Complete sequence of Pectobacterium carotovorum subsp. carotovorum PC1.</title>
        <authorList>
            <consortium name="US DOE Joint Genome Institute"/>
            <person name="Lucas S."/>
            <person name="Copeland A."/>
            <person name="Lapidus A."/>
            <person name="Glavina del Rio T."/>
            <person name="Tice H."/>
            <person name="Bruce D."/>
            <person name="Goodwin L."/>
            <person name="Pitluck S."/>
            <person name="Munk A.C."/>
            <person name="Brettin T."/>
            <person name="Detter J.C."/>
            <person name="Han C."/>
            <person name="Tapia R."/>
            <person name="Larimer F."/>
            <person name="Land M."/>
            <person name="Hauser L."/>
            <person name="Kyrpides N."/>
            <person name="Mikhailova N."/>
            <person name="Balakrishnan V."/>
            <person name="Glasner J."/>
            <person name="Perna N.T."/>
        </authorList>
    </citation>
    <scope>NUCLEOTIDE SEQUENCE [LARGE SCALE GENOMIC DNA]</scope>
    <source>
        <strain>PC1</strain>
    </source>
</reference>
<keyword id="KW-0030">Aminoacyl-tRNA synthetase</keyword>
<keyword id="KW-0067">ATP-binding</keyword>
<keyword id="KW-0963">Cytoplasm</keyword>
<keyword id="KW-0436">Ligase</keyword>
<keyword id="KW-0547">Nucleotide-binding</keyword>
<keyword id="KW-0648">Protein biosynthesis</keyword>